<dbReference type="EC" id="2.3.1.269" evidence="1"/>
<dbReference type="EMBL" id="BA000040">
    <property type="protein sequence ID" value="BAC46056.1"/>
    <property type="molecule type" value="Genomic_DNA"/>
</dbReference>
<dbReference type="RefSeq" id="NP_767431.1">
    <property type="nucleotide sequence ID" value="NC_004463.1"/>
</dbReference>
<dbReference type="RefSeq" id="WP_011083613.1">
    <property type="nucleotide sequence ID" value="NC_004463.1"/>
</dbReference>
<dbReference type="SMR" id="Q89WA1"/>
<dbReference type="FunCoup" id="Q89WA1">
    <property type="interactions" value="422"/>
</dbReference>
<dbReference type="STRING" id="224911.AAV28_00805"/>
<dbReference type="EnsemblBacteria" id="BAC46056">
    <property type="protein sequence ID" value="BAC46056"/>
    <property type="gene ID" value="BAC46056"/>
</dbReference>
<dbReference type="GeneID" id="46488067"/>
<dbReference type="KEGG" id="bja:bll0791"/>
<dbReference type="PATRIC" id="fig|224911.44.peg.166"/>
<dbReference type="eggNOG" id="COG0815">
    <property type="taxonomic scope" value="Bacteria"/>
</dbReference>
<dbReference type="HOGENOM" id="CLU_019563_3_1_5"/>
<dbReference type="InParanoid" id="Q89WA1"/>
<dbReference type="OrthoDB" id="9804277at2"/>
<dbReference type="PhylomeDB" id="Q89WA1"/>
<dbReference type="UniPathway" id="UPA00666"/>
<dbReference type="Proteomes" id="UP000002526">
    <property type="component" value="Chromosome"/>
</dbReference>
<dbReference type="GO" id="GO:0005886">
    <property type="term" value="C:plasma membrane"/>
    <property type="evidence" value="ECO:0007669"/>
    <property type="project" value="UniProtKB-SubCell"/>
</dbReference>
<dbReference type="GO" id="GO:0016410">
    <property type="term" value="F:N-acyltransferase activity"/>
    <property type="evidence" value="ECO:0007669"/>
    <property type="project" value="UniProtKB-UniRule"/>
</dbReference>
<dbReference type="GO" id="GO:0042158">
    <property type="term" value="P:lipoprotein biosynthetic process"/>
    <property type="evidence" value="ECO:0007669"/>
    <property type="project" value="UniProtKB-UniRule"/>
</dbReference>
<dbReference type="CDD" id="cd07571">
    <property type="entry name" value="ALP_N-acyl_transferase"/>
    <property type="match status" value="1"/>
</dbReference>
<dbReference type="Gene3D" id="3.60.110.10">
    <property type="entry name" value="Carbon-nitrogen hydrolase"/>
    <property type="match status" value="1"/>
</dbReference>
<dbReference type="HAMAP" id="MF_01148">
    <property type="entry name" value="Lnt"/>
    <property type="match status" value="1"/>
</dbReference>
<dbReference type="InterPro" id="IPR004563">
    <property type="entry name" value="Apolipo_AcylTrfase"/>
</dbReference>
<dbReference type="InterPro" id="IPR003010">
    <property type="entry name" value="C-N_Hydrolase"/>
</dbReference>
<dbReference type="InterPro" id="IPR036526">
    <property type="entry name" value="C-N_Hydrolase_sf"/>
</dbReference>
<dbReference type="InterPro" id="IPR045378">
    <property type="entry name" value="LNT_N"/>
</dbReference>
<dbReference type="NCBIfam" id="TIGR00546">
    <property type="entry name" value="lnt"/>
    <property type="match status" value="1"/>
</dbReference>
<dbReference type="PANTHER" id="PTHR38686">
    <property type="entry name" value="APOLIPOPROTEIN N-ACYLTRANSFERASE"/>
    <property type="match status" value="1"/>
</dbReference>
<dbReference type="PANTHER" id="PTHR38686:SF1">
    <property type="entry name" value="APOLIPOPROTEIN N-ACYLTRANSFERASE"/>
    <property type="match status" value="1"/>
</dbReference>
<dbReference type="Pfam" id="PF00795">
    <property type="entry name" value="CN_hydrolase"/>
    <property type="match status" value="1"/>
</dbReference>
<dbReference type="Pfam" id="PF20154">
    <property type="entry name" value="LNT_N"/>
    <property type="match status" value="1"/>
</dbReference>
<dbReference type="SUPFAM" id="SSF56317">
    <property type="entry name" value="Carbon-nitrogen hydrolase"/>
    <property type="match status" value="1"/>
</dbReference>
<dbReference type="PROSITE" id="PS50263">
    <property type="entry name" value="CN_HYDROLASE"/>
    <property type="match status" value="1"/>
</dbReference>
<comment type="function">
    <text evidence="1">Catalyzes the phospholipid dependent N-acylation of the N-terminal cysteine of apolipoprotein, the last step in lipoprotein maturation.</text>
</comment>
<comment type="catalytic activity">
    <reaction evidence="1">
        <text>N-terminal S-1,2-diacyl-sn-glyceryl-L-cysteinyl-[lipoprotein] + a glycerophospholipid = N-acyl-S-1,2-diacyl-sn-glyceryl-L-cysteinyl-[lipoprotein] + a 2-acyl-sn-glycero-3-phospholipid + H(+)</text>
        <dbReference type="Rhea" id="RHEA:48228"/>
        <dbReference type="Rhea" id="RHEA-COMP:14681"/>
        <dbReference type="Rhea" id="RHEA-COMP:14684"/>
        <dbReference type="ChEBI" id="CHEBI:15378"/>
        <dbReference type="ChEBI" id="CHEBI:136912"/>
        <dbReference type="ChEBI" id="CHEBI:140656"/>
        <dbReference type="ChEBI" id="CHEBI:140657"/>
        <dbReference type="ChEBI" id="CHEBI:140660"/>
        <dbReference type="EC" id="2.3.1.269"/>
    </reaction>
</comment>
<comment type="pathway">
    <text evidence="1">Protein modification; lipoprotein biosynthesis (N-acyl transfer).</text>
</comment>
<comment type="subcellular location">
    <subcellularLocation>
        <location evidence="1">Cell inner membrane</location>
        <topology evidence="1">Multi-pass membrane protein</topology>
    </subcellularLocation>
</comment>
<comment type="similarity">
    <text evidence="1">Belongs to the CN hydrolase family. Apolipoprotein N-acyltransferase subfamily.</text>
</comment>
<reference key="1">
    <citation type="journal article" date="2002" name="DNA Res.">
        <title>Complete genomic sequence of nitrogen-fixing symbiotic bacterium Bradyrhizobium japonicum USDA110.</title>
        <authorList>
            <person name="Kaneko T."/>
            <person name="Nakamura Y."/>
            <person name="Sato S."/>
            <person name="Minamisawa K."/>
            <person name="Uchiumi T."/>
            <person name="Sasamoto S."/>
            <person name="Watanabe A."/>
            <person name="Idesawa K."/>
            <person name="Iriguchi M."/>
            <person name="Kawashima K."/>
            <person name="Kohara M."/>
            <person name="Matsumoto M."/>
            <person name="Shimpo S."/>
            <person name="Tsuruoka H."/>
            <person name="Wada T."/>
            <person name="Yamada M."/>
            <person name="Tabata S."/>
        </authorList>
    </citation>
    <scope>NUCLEOTIDE SEQUENCE [LARGE SCALE GENOMIC DNA]</scope>
    <source>
        <strain>JCM 10833 / BCRC 13528 / IAM 13628 / NBRC 14792 / USDA 110</strain>
    </source>
</reference>
<name>LNT_BRADU</name>
<protein>
    <recommendedName>
        <fullName evidence="1">Apolipoprotein N-acyltransferase</fullName>
        <shortName evidence="1">ALP N-acyltransferase</shortName>
        <ecNumber evidence="1">2.3.1.269</ecNumber>
    </recommendedName>
</protein>
<gene>
    <name evidence="1" type="primary">lnt</name>
    <name type="ordered locus">bll0791</name>
</gene>
<organism>
    <name type="scientific">Bradyrhizobium diazoefficiens (strain JCM 10833 / BCRC 13528 / IAM 13628 / NBRC 14792 / USDA 110)</name>
    <dbReference type="NCBI Taxonomy" id="224911"/>
    <lineage>
        <taxon>Bacteria</taxon>
        <taxon>Pseudomonadati</taxon>
        <taxon>Pseudomonadota</taxon>
        <taxon>Alphaproteobacteria</taxon>
        <taxon>Hyphomicrobiales</taxon>
        <taxon>Nitrobacteraceae</taxon>
        <taxon>Bradyrhizobium</taxon>
    </lineage>
</organism>
<keyword id="KW-0012">Acyltransferase</keyword>
<keyword id="KW-0997">Cell inner membrane</keyword>
<keyword id="KW-1003">Cell membrane</keyword>
<keyword id="KW-0472">Membrane</keyword>
<keyword id="KW-1185">Reference proteome</keyword>
<keyword id="KW-0808">Transferase</keyword>
<keyword id="KW-0812">Transmembrane</keyword>
<keyword id="KW-1133">Transmembrane helix</keyword>
<accession>Q89WA1</accession>
<evidence type="ECO:0000255" key="1">
    <source>
        <dbReference type="HAMAP-Rule" id="MF_01148"/>
    </source>
</evidence>
<sequence>MSAFQRLRQIALAIILTWGWKRALVAITAGALSVLALAPFNLFPVLFITFPVLVWLIDGAGAGRYRGIPAAALTGYWFGLGYFVPGLYWIGYAFFVDADVFAWLTPFAVLGLPAYLSIFTAIGFALARLLWTKNATRVLALAASLTIAEWLRGHALTGFPWNAFGYALSEPLPLAQTASLIGLWGMTFLTVAIFASPATLIDRTPDRRVAWRAPAAAVALLIAMSIFGAIRLSLHPTTMVAGAKLRLMQPNLQQDAKFNYAAKTEVMKKYLALSDRASGPQSTGVRDATILIWPESAFPFFLTREADAMAEIAELLPKGTVLITGSVRAPDLPRGTPITRAYNSIYVIDHDGSVLAVYDKLHLVPFGEFLPYQDLMEKLGFEQLTRVRGGFIAGTVRHALPMPGAPSALPLICYEAIFPGEVAGRNERPGWIVNLTNDGWFGISTGPYQHLEQARMRAIELGLPLVRSANTGISAVIDPVGRTVASLGLGVEGILDASLPAAIPPTIYARVGDVPAAVLVALAVLLAVRRRVAKRHP</sequence>
<proteinExistence type="inferred from homology"/>
<feature type="chain" id="PRO_0000178049" description="Apolipoprotein N-acyltransferase">
    <location>
        <begin position="1"/>
        <end position="537"/>
    </location>
</feature>
<feature type="transmembrane region" description="Helical" evidence="1">
    <location>
        <begin position="10"/>
        <end position="30"/>
    </location>
</feature>
<feature type="transmembrane region" description="Helical" evidence="1">
    <location>
        <begin position="37"/>
        <end position="57"/>
    </location>
</feature>
<feature type="transmembrane region" description="Helical" evidence="1">
    <location>
        <begin position="76"/>
        <end position="96"/>
    </location>
</feature>
<feature type="transmembrane region" description="Helical" evidence="1">
    <location>
        <begin position="107"/>
        <end position="127"/>
    </location>
</feature>
<feature type="transmembrane region" description="Helical" evidence="1">
    <location>
        <begin position="181"/>
        <end position="201"/>
    </location>
</feature>
<feature type="transmembrane region" description="Helical" evidence="1">
    <location>
        <begin position="210"/>
        <end position="230"/>
    </location>
</feature>
<feature type="transmembrane region" description="Helical" evidence="1">
    <location>
        <begin position="507"/>
        <end position="527"/>
    </location>
</feature>
<feature type="domain" description="CN hydrolase" evidence="1">
    <location>
        <begin position="248"/>
        <end position="501"/>
    </location>
</feature>
<feature type="active site" description="Proton acceptor" evidence="1">
    <location>
        <position position="295"/>
    </location>
</feature>
<feature type="active site" evidence="1">
    <location>
        <position position="360"/>
    </location>
</feature>
<feature type="active site" description="Nucleophile" evidence="1">
    <location>
        <position position="413"/>
    </location>
</feature>